<evidence type="ECO:0000255" key="1">
    <source>
        <dbReference type="PROSITE-ProRule" id="PRU00175"/>
    </source>
</evidence>
<evidence type="ECO:0000255" key="2">
    <source>
        <dbReference type="PROSITE-ProRule" id="PRU01144"/>
    </source>
</evidence>
<evidence type="ECO:0000269" key="3">
    <source>
    </source>
</evidence>
<evidence type="ECO:0000269" key="4">
    <source>
    </source>
</evidence>
<evidence type="ECO:0000303" key="5">
    <source>
    </source>
</evidence>
<evidence type="ECO:0000303" key="6">
    <source>
    </source>
</evidence>
<evidence type="ECO:0000303" key="7">
    <source>
    </source>
</evidence>
<evidence type="ECO:0000305" key="8"/>
<gene>
    <name type="primary">RNF166</name>
</gene>
<sequence>MAMFRSLVASAQQRQPPAGPAGGDSGLEAQYTCPICLEVYHRPVAIGSCGHTFCGECLQPCLQVPSPLCPLCRLPFDPKKVDKATHVEKQLSSYKAPCRGCNKKVTLAKMRVHISSCLKVQEQMANCPKFVPVVPTSQPIPSNIPNRSTFACPYCGARNLDQQELVKHCVESHRSDPNRVVCPICSAMPWGDPSYKSANFLQHLLHRHKFSYDTFVDYSIDEEAAFQAALALSLSEN</sequence>
<dbReference type="EC" id="2.3.2.27" evidence="4"/>
<dbReference type="EMBL" id="AK057106">
    <property type="protein sequence ID" value="BAG51865.1"/>
    <property type="molecule type" value="mRNA"/>
</dbReference>
<dbReference type="EMBL" id="AK057201">
    <property type="protein sequence ID" value="BAB71380.1"/>
    <property type="molecule type" value="mRNA"/>
</dbReference>
<dbReference type="EMBL" id="AC138028">
    <property type="status" value="NOT_ANNOTATED_CDS"/>
    <property type="molecule type" value="Genomic_DNA"/>
</dbReference>
<dbReference type="EMBL" id="CH471184">
    <property type="protein sequence ID" value="EAW66784.1"/>
    <property type="molecule type" value="Genomic_DNA"/>
</dbReference>
<dbReference type="EMBL" id="CH471184">
    <property type="protein sequence ID" value="EAW66781.1"/>
    <property type="molecule type" value="Genomic_DNA"/>
</dbReference>
<dbReference type="EMBL" id="CH471184">
    <property type="protein sequence ID" value="EAW66785.1"/>
    <property type="molecule type" value="Genomic_DNA"/>
</dbReference>
<dbReference type="EMBL" id="BC013948">
    <property type="protein sequence ID" value="AAH13948.1"/>
    <property type="molecule type" value="mRNA"/>
</dbReference>
<dbReference type="EMBL" id="BC017226">
    <property type="protein sequence ID" value="AAH17226.1"/>
    <property type="molecule type" value="mRNA"/>
</dbReference>
<dbReference type="EMBL" id="BI911983">
    <property type="status" value="NOT_ANNOTATED_CDS"/>
    <property type="molecule type" value="mRNA"/>
</dbReference>
<dbReference type="CCDS" id="CCDS10969.1">
    <molecule id="Q96A37-1"/>
</dbReference>
<dbReference type="CCDS" id="CCDS54056.1">
    <molecule id="Q96A37-2"/>
</dbReference>
<dbReference type="CCDS" id="CCDS54057.1">
    <molecule id="Q96A37-3"/>
</dbReference>
<dbReference type="RefSeq" id="NP_001165286.1">
    <molecule id="Q96A37-3"/>
    <property type="nucleotide sequence ID" value="NM_001171815.2"/>
</dbReference>
<dbReference type="RefSeq" id="NP_001165287.1">
    <molecule id="Q96A37-2"/>
    <property type="nucleotide sequence ID" value="NM_001171816.2"/>
</dbReference>
<dbReference type="RefSeq" id="NP_849163.1">
    <molecule id="Q96A37-1"/>
    <property type="nucleotide sequence ID" value="NM_178841.4"/>
</dbReference>
<dbReference type="RefSeq" id="XP_016878402.1">
    <property type="nucleotide sequence ID" value="XM_017022913.1"/>
</dbReference>
<dbReference type="RefSeq" id="XP_047289536.1">
    <molecule id="Q96A37-2"/>
    <property type="nucleotide sequence ID" value="XM_047433580.1"/>
</dbReference>
<dbReference type="RefSeq" id="XP_054235497.1">
    <molecule id="Q96A37-2"/>
    <property type="nucleotide sequence ID" value="XM_054379522.1"/>
</dbReference>
<dbReference type="SMR" id="Q96A37"/>
<dbReference type="BioGRID" id="125465">
    <property type="interactions" value="96"/>
</dbReference>
<dbReference type="FunCoup" id="Q96A37">
    <property type="interactions" value="823"/>
</dbReference>
<dbReference type="IntAct" id="Q96A37">
    <property type="interactions" value="75"/>
</dbReference>
<dbReference type="STRING" id="9606.ENSP00000326095"/>
<dbReference type="iPTMnet" id="Q96A37"/>
<dbReference type="PhosphoSitePlus" id="Q96A37"/>
<dbReference type="BioMuta" id="RNF166"/>
<dbReference type="DMDM" id="74762644"/>
<dbReference type="jPOST" id="Q96A37"/>
<dbReference type="MassIVE" id="Q96A37"/>
<dbReference type="PaxDb" id="9606-ENSP00000326095"/>
<dbReference type="PeptideAtlas" id="Q96A37"/>
<dbReference type="ProteomicsDB" id="42744"/>
<dbReference type="ProteomicsDB" id="75905">
    <molecule id="Q96A37-1"/>
</dbReference>
<dbReference type="ProteomicsDB" id="75906">
    <molecule id="Q96A37-2"/>
</dbReference>
<dbReference type="Pumba" id="Q96A37"/>
<dbReference type="Antibodypedia" id="30751">
    <property type="antibodies" value="121 antibodies from 20 providers"/>
</dbReference>
<dbReference type="DNASU" id="115992"/>
<dbReference type="Ensembl" id="ENST00000312838.9">
    <molecule id="Q96A37-1"/>
    <property type="protein sequence ID" value="ENSP00000326095.4"/>
    <property type="gene ID" value="ENSG00000158717.11"/>
</dbReference>
<dbReference type="Ensembl" id="ENST00000537718.6">
    <molecule id="Q96A37-2"/>
    <property type="protein sequence ID" value="ENSP00000446301.2"/>
    <property type="gene ID" value="ENSG00000158717.11"/>
</dbReference>
<dbReference type="Ensembl" id="ENST00000541206.6">
    <molecule id="Q96A37-2"/>
    <property type="protein sequence ID" value="ENSP00000440454.2"/>
    <property type="gene ID" value="ENSG00000158717.11"/>
</dbReference>
<dbReference type="Ensembl" id="ENST00000567844.1">
    <molecule id="Q96A37-3"/>
    <property type="protein sequence ID" value="ENSP00000457336.1"/>
    <property type="gene ID" value="ENSG00000158717.11"/>
</dbReference>
<dbReference type="GeneID" id="115992"/>
<dbReference type="KEGG" id="hsa:115992"/>
<dbReference type="MANE-Select" id="ENST00000312838.9">
    <property type="protein sequence ID" value="ENSP00000326095.4"/>
    <property type="RefSeq nucleotide sequence ID" value="NM_178841.4"/>
    <property type="RefSeq protein sequence ID" value="NP_849163.1"/>
</dbReference>
<dbReference type="UCSC" id="uc002flk.3">
    <molecule id="Q96A37-1"/>
    <property type="organism name" value="human"/>
</dbReference>
<dbReference type="AGR" id="HGNC:28856"/>
<dbReference type="CTD" id="115992"/>
<dbReference type="DisGeNET" id="115992"/>
<dbReference type="GeneCards" id="RNF166"/>
<dbReference type="HGNC" id="HGNC:28856">
    <property type="gene designation" value="RNF166"/>
</dbReference>
<dbReference type="HPA" id="ENSG00000158717">
    <property type="expression patterns" value="Tissue enhanced (bone marrow, lymphoid tissue)"/>
</dbReference>
<dbReference type="neXtProt" id="NX_Q96A37"/>
<dbReference type="OpenTargets" id="ENSG00000158717"/>
<dbReference type="PharmGKB" id="PA134915234"/>
<dbReference type="VEuPathDB" id="HostDB:ENSG00000158717"/>
<dbReference type="eggNOG" id="ENOG502RB47">
    <property type="taxonomic scope" value="Eukaryota"/>
</dbReference>
<dbReference type="GeneTree" id="ENSGT00950000182909"/>
<dbReference type="HOGENOM" id="CLU_092448_1_0_1"/>
<dbReference type="InParanoid" id="Q96A37"/>
<dbReference type="OMA" id="AHTFCGD"/>
<dbReference type="OrthoDB" id="6270329at2759"/>
<dbReference type="PAN-GO" id="Q96A37">
    <property type="GO annotations" value="3 GO annotations based on evolutionary models"/>
</dbReference>
<dbReference type="PhylomeDB" id="Q96A37"/>
<dbReference type="TreeFam" id="TF331012"/>
<dbReference type="PathwayCommons" id="Q96A37"/>
<dbReference type="SignaLink" id="Q96A37"/>
<dbReference type="SIGNOR" id="Q96A37"/>
<dbReference type="UniPathway" id="UPA00143"/>
<dbReference type="BioGRID-ORCS" id="115992">
    <property type="hits" value="11 hits in 1193 CRISPR screens"/>
</dbReference>
<dbReference type="ChiTaRS" id="RNF166">
    <property type="organism name" value="human"/>
</dbReference>
<dbReference type="GenomeRNAi" id="115992"/>
<dbReference type="Pharos" id="Q96A37">
    <property type="development level" value="Tdark"/>
</dbReference>
<dbReference type="PRO" id="PR:Q96A37"/>
<dbReference type="Proteomes" id="UP000005640">
    <property type="component" value="Chromosome 16"/>
</dbReference>
<dbReference type="RNAct" id="Q96A37">
    <property type="molecule type" value="protein"/>
</dbReference>
<dbReference type="Bgee" id="ENSG00000158717">
    <property type="expression patterns" value="Expressed in granulocyte and 137 other cell types or tissues"/>
</dbReference>
<dbReference type="ExpressionAtlas" id="Q96A37">
    <property type="expression patterns" value="baseline and differential"/>
</dbReference>
<dbReference type="GO" id="GO:0005737">
    <property type="term" value="C:cytoplasm"/>
    <property type="evidence" value="ECO:0007669"/>
    <property type="project" value="UniProtKB-SubCell"/>
</dbReference>
<dbReference type="GO" id="GO:0061630">
    <property type="term" value="F:ubiquitin protein ligase activity"/>
    <property type="evidence" value="ECO:0000318"/>
    <property type="project" value="GO_Central"/>
</dbReference>
<dbReference type="GO" id="GO:0008270">
    <property type="term" value="F:zinc ion binding"/>
    <property type="evidence" value="ECO:0007669"/>
    <property type="project" value="UniProtKB-KW"/>
</dbReference>
<dbReference type="GO" id="GO:0006914">
    <property type="term" value="P:autophagy"/>
    <property type="evidence" value="ECO:0007669"/>
    <property type="project" value="UniProtKB-KW"/>
</dbReference>
<dbReference type="GO" id="GO:0045087">
    <property type="term" value="P:innate immune response"/>
    <property type="evidence" value="ECO:0007669"/>
    <property type="project" value="UniProtKB-KW"/>
</dbReference>
<dbReference type="GO" id="GO:0000209">
    <property type="term" value="P:protein polyubiquitination"/>
    <property type="evidence" value="ECO:0000318"/>
    <property type="project" value="GO_Central"/>
</dbReference>
<dbReference type="GO" id="GO:0006511">
    <property type="term" value="P:ubiquitin-dependent protein catabolic process"/>
    <property type="evidence" value="ECO:0000318"/>
    <property type="project" value="GO_Central"/>
</dbReference>
<dbReference type="CDD" id="cd16549">
    <property type="entry name" value="RING-HC_RNF166"/>
    <property type="match status" value="1"/>
</dbReference>
<dbReference type="Gene3D" id="3.30.40.10">
    <property type="entry name" value="Zinc/RING finger domain, C3HC4 (zinc finger)"/>
    <property type="match status" value="1"/>
</dbReference>
<dbReference type="InterPro" id="IPR008598">
    <property type="entry name" value="Di19_Zn-bd"/>
</dbReference>
<dbReference type="InterPro" id="IPR051438">
    <property type="entry name" value="RNF_E3_ubiq-protein_ligase"/>
</dbReference>
<dbReference type="InterPro" id="IPR034734">
    <property type="entry name" value="ZF_C2HC_RNF"/>
</dbReference>
<dbReference type="InterPro" id="IPR027370">
    <property type="entry name" value="Znf-RING_euk"/>
</dbReference>
<dbReference type="InterPro" id="IPR001841">
    <property type="entry name" value="Znf_RING"/>
</dbReference>
<dbReference type="InterPro" id="IPR013083">
    <property type="entry name" value="Znf_RING/FYVE/PHD"/>
</dbReference>
<dbReference type="InterPro" id="IPR017907">
    <property type="entry name" value="Znf_RING_CS"/>
</dbReference>
<dbReference type="PANTHER" id="PTHR46016:SF4">
    <property type="entry name" value="E3 UBIQUITIN-PROTEIN LIGASE RNF166"/>
    <property type="match status" value="1"/>
</dbReference>
<dbReference type="PANTHER" id="PTHR46016">
    <property type="entry name" value="ZINC FINGER, RING/FYVE/PHD-TYPE"/>
    <property type="match status" value="1"/>
</dbReference>
<dbReference type="Pfam" id="PF05605">
    <property type="entry name" value="zf-Di19"/>
    <property type="match status" value="1"/>
</dbReference>
<dbReference type="Pfam" id="PF13445">
    <property type="entry name" value="zf-RING_UBOX"/>
    <property type="match status" value="1"/>
</dbReference>
<dbReference type="Pfam" id="PF18574">
    <property type="entry name" value="zf_C2HC_14"/>
    <property type="match status" value="1"/>
</dbReference>
<dbReference type="SMART" id="SM00184">
    <property type="entry name" value="RING"/>
    <property type="match status" value="1"/>
</dbReference>
<dbReference type="SUPFAM" id="SSF57850">
    <property type="entry name" value="RING/U-box"/>
    <property type="match status" value="1"/>
</dbReference>
<dbReference type="PROSITE" id="PS51803">
    <property type="entry name" value="ZF_C2HC_RNF"/>
    <property type="match status" value="1"/>
</dbReference>
<dbReference type="PROSITE" id="PS00518">
    <property type="entry name" value="ZF_RING_1"/>
    <property type="match status" value="1"/>
</dbReference>
<dbReference type="PROSITE" id="PS50089">
    <property type="entry name" value="ZF_RING_2"/>
    <property type="match status" value="1"/>
</dbReference>
<name>RN166_HUMAN</name>
<organism>
    <name type="scientific">Homo sapiens</name>
    <name type="common">Human</name>
    <dbReference type="NCBI Taxonomy" id="9606"/>
    <lineage>
        <taxon>Eukaryota</taxon>
        <taxon>Metazoa</taxon>
        <taxon>Chordata</taxon>
        <taxon>Craniata</taxon>
        <taxon>Vertebrata</taxon>
        <taxon>Euteleostomi</taxon>
        <taxon>Mammalia</taxon>
        <taxon>Eutheria</taxon>
        <taxon>Euarchontoglires</taxon>
        <taxon>Primates</taxon>
        <taxon>Haplorrhini</taxon>
        <taxon>Catarrhini</taxon>
        <taxon>Hominidae</taxon>
        <taxon>Homo</taxon>
    </lineage>
</organism>
<comment type="function">
    <text evidence="3 4">E3 ubiquitin-protein ligase that promotes the ubiquitination of different substrates (PubMed:27880896). In turn, participates in different biological processes including interferon production or autophagy (PubMed:26456228, PubMed:27880896). Plays a role in the activation of RNA virus-induced interferon-beta production by promoting the ubiquitination of TRAF3 and TRAF6 (PubMed:26456228). Also plays a role in the early recruitment of autophagy adapters to bacteria (PubMed:27880896). Mediates 'Lys-29' and 'Lys-33'-linked ubiquitination of SQSTM1 leading to xenophagic targeting of bacteria and inhibition of their replication (PubMed:27880896).</text>
</comment>
<comment type="catalytic activity">
    <reaction evidence="4">
        <text>S-ubiquitinyl-[E2 ubiquitin-conjugating enzyme]-L-cysteine + [acceptor protein]-L-lysine = [E2 ubiquitin-conjugating enzyme]-L-cysteine + N(6)-ubiquitinyl-[acceptor protein]-L-lysine.</text>
        <dbReference type="EC" id="2.3.2.27"/>
    </reaction>
</comment>
<comment type="pathway">
    <text evidence="4">Protein modification; protein ubiquitination.</text>
</comment>
<comment type="interaction">
    <interactant intactId="EBI-2130320">
        <id>Q96A37</id>
    </interactant>
    <interactant intactId="EBI-21251460">
        <id>O60260-5</id>
        <label>PRKN</label>
    </interactant>
    <organismsDiffer>false</organismsDiffer>
    <experiments>3</experiments>
</comment>
<comment type="interaction">
    <interactant intactId="EBI-2130320">
        <id>Q96A37</id>
    </interactant>
    <interactant intactId="EBI-372899">
        <id>Q13148</id>
        <label>TARDBP</label>
    </interactant>
    <organismsDiffer>false</organismsDiffer>
    <experiments>3</experiments>
</comment>
<comment type="interaction">
    <interactant intactId="EBI-2130320">
        <id>Q96A37</id>
    </interactant>
    <interactant intactId="EBI-745527">
        <id>Q9Y2X8</id>
        <label>UBE2D4</label>
    </interactant>
    <organismsDiffer>false</organismsDiffer>
    <experiments>4</experiments>
</comment>
<comment type="interaction">
    <interactant intactId="EBI-2130320">
        <id>Q96A37</id>
    </interactant>
    <interactant intactId="EBI-473850">
        <id>P61086</id>
        <label>UBE2K</label>
    </interactant>
    <organismsDiffer>false</organismsDiffer>
    <experiments>3</experiments>
</comment>
<comment type="interaction">
    <interactant intactId="EBI-2130320">
        <id>Q96A37</id>
    </interactant>
    <interactant intactId="EBI-2815120">
        <id>Q6GPH4</id>
        <label>XAF1</label>
    </interactant>
    <organismsDiffer>false</organismsDiffer>
    <experiments>4</experiments>
</comment>
<comment type="subcellular location">
    <subcellularLocation>
        <location evidence="3">Cytoplasm</location>
    </subcellularLocation>
</comment>
<comment type="alternative products">
    <event type="alternative splicing"/>
    <isoform>
        <id>Q96A37-1</id>
        <name>1</name>
        <sequence type="displayed"/>
    </isoform>
    <isoform>
        <id>Q96A37-2</id>
        <name>2</name>
        <sequence type="described" ref="VSP_019750"/>
    </isoform>
    <isoform>
        <id>Q96A37-3</id>
        <name>3</name>
        <sequence type="described" ref="VSP_046147"/>
    </isoform>
</comment>
<protein>
    <recommendedName>
        <fullName evidence="7">E3 ubiquitin-protein ligase RNF166</fullName>
        <ecNumber evidence="4">2.3.2.27</ecNumber>
    </recommendedName>
    <alternativeName>
        <fullName>RING finger protein 166</fullName>
    </alternativeName>
    <alternativeName>
        <fullName evidence="8">RING-type E3 ubiquitin transferase RNF166</fullName>
    </alternativeName>
</protein>
<feature type="chain" id="PRO_0000245588" description="E3 ubiquitin-protein ligase RNF166">
    <location>
        <begin position="1"/>
        <end position="237"/>
    </location>
</feature>
<feature type="domain" description="UIM" evidence="8">
    <location>
        <begin position="221"/>
        <end position="237"/>
    </location>
</feature>
<feature type="zinc finger region" description="RING-type" evidence="1">
    <location>
        <begin position="33"/>
        <end position="73"/>
    </location>
</feature>
<feature type="zinc finger region" description="C2HC RNF-type" evidence="2">
    <location>
        <begin position="98"/>
        <end position="117"/>
    </location>
</feature>
<feature type="binding site" evidence="2">
    <location>
        <position position="98"/>
    </location>
    <ligand>
        <name>Zn(2+)</name>
        <dbReference type="ChEBI" id="CHEBI:29105"/>
    </ligand>
</feature>
<feature type="binding site" evidence="2">
    <location>
        <position position="101"/>
    </location>
    <ligand>
        <name>Zn(2+)</name>
        <dbReference type="ChEBI" id="CHEBI:29105"/>
    </ligand>
</feature>
<feature type="binding site" evidence="2">
    <location>
        <position position="113"/>
    </location>
    <ligand>
        <name>Zn(2+)</name>
        <dbReference type="ChEBI" id="CHEBI:29105"/>
    </ligand>
</feature>
<feature type="binding site" evidence="2">
    <location>
        <position position="117"/>
    </location>
    <ligand>
        <name>Zn(2+)</name>
        <dbReference type="ChEBI" id="CHEBI:29105"/>
    </ligand>
</feature>
<feature type="splice variant" id="VSP_019750" description="In isoform 2." evidence="5">
    <location>
        <begin position="1"/>
        <end position="109"/>
    </location>
</feature>
<feature type="splice variant" id="VSP_046147" description="In isoform 3." evidence="6">
    <location>
        <begin position="39"/>
        <end position="119"/>
    </location>
</feature>
<feature type="mutagenesis site" description="Complete loss of SQSTM1 ubiquitination; in association with A-36." evidence="4">
    <original>C</original>
    <variation>A</variation>
    <location>
        <position position="33"/>
    </location>
</feature>
<feature type="mutagenesis site" description="Complete loss of SQSTM1 ubiquitination; in association with A-33." evidence="4">
    <original>C</original>
    <variation>A</variation>
    <location>
        <position position="36"/>
    </location>
</feature>
<feature type="sequence conflict" description="In Ref. 4; BI911983." evidence="8" ref="4">
    <original>A</original>
    <variation>V</variation>
    <location>
        <position position="11"/>
    </location>
</feature>
<feature type="sequence conflict" description="In Ref. 4; BI911983." evidence="8" ref="4">
    <original>E</original>
    <variation>K</variation>
    <location>
        <position position="38"/>
    </location>
</feature>
<feature type="sequence conflict" description="In Ref. 1; BAB71380." evidence="8" ref="1">
    <original>S</original>
    <variation>G</variation>
    <location>
        <position position="175"/>
    </location>
</feature>
<proteinExistence type="evidence at protein level"/>
<reference key="1">
    <citation type="journal article" date="2004" name="Nat. Genet.">
        <title>Complete sequencing and characterization of 21,243 full-length human cDNAs.</title>
        <authorList>
            <person name="Ota T."/>
            <person name="Suzuki Y."/>
            <person name="Nishikawa T."/>
            <person name="Otsuki T."/>
            <person name="Sugiyama T."/>
            <person name="Irie R."/>
            <person name="Wakamatsu A."/>
            <person name="Hayashi K."/>
            <person name="Sato H."/>
            <person name="Nagai K."/>
            <person name="Kimura K."/>
            <person name="Makita H."/>
            <person name="Sekine M."/>
            <person name="Obayashi M."/>
            <person name="Nishi T."/>
            <person name="Shibahara T."/>
            <person name="Tanaka T."/>
            <person name="Ishii S."/>
            <person name="Yamamoto J."/>
            <person name="Saito K."/>
            <person name="Kawai Y."/>
            <person name="Isono Y."/>
            <person name="Nakamura Y."/>
            <person name="Nagahari K."/>
            <person name="Murakami K."/>
            <person name="Yasuda T."/>
            <person name="Iwayanagi T."/>
            <person name="Wagatsuma M."/>
            <person name="Shiratori A."/>
            <person name="Sudo H."/>
            <person name="Hosoiri T."/>
            <person name="Kaku Y."/>
            <person name="Kodaira H."/>
            <person name="Kondo H."/>
            <person name="Sugawara M."/>
            <person name="Takahashi M."/>
            <person name="Kanda K."/>
            <person name="Yokoi T."/>
            <person name="Furuya T."/>
            <person name="Kikkawa E."/>
            <person name="Omura Y."/>
            <person name="Abe K."/>
            <person name="Kamihara K."/>
            <person name="Katsuta N."/>
            <person name="Sato K."/>
            <person name="Tanikawa M."/>
            <person name="Yamazaki M."/>
            <person name="Ninomiya K."/>
            <person name="Ishibashi T."/>
            <person name="Yamashita H."/>
            <person name="Murakawa K."/>
            <person name="Fujimori K."/>
            <person name="Tanai H."/>
            <person name="Kimata M."/>
            <person name="Watanabe M."/>
            <person name="Hiraoka S."/>
            <person name="Chiba Y."/>
            <person name="Ishida S."/>
            <person name="Ono Y."/>
            <person name="Takiguchi S."/>
            <person name="Watanabe S."/>
            <person name="Yosida M."/>
            <person name="Hotuta T."/>
            <person name="Kusano J."/>
            <person name="Kanehori K."/>
            <person name="Takahashi-Fujii A."/>
            <person name="Hara H."/>
            <person name="Tanase T.-O."/>
            <person name="Nomura Y."/>
            <person name="Togiya S."/>
            <person name="Komai F."/>
            <person name="Hara R."/>
            <person name="Takeuchi K."/>
            <person name="Arita M."/>
            <person name="Imose N."/>
            <person name="Musashino K."/>
            <person name="Yuuki H."/>
            <person name="Oshima A."/>
            <person name="Sasaki N."/>
            <person name="Aotsuka S."/>
            <person name="Yoshikawa Y."/>
            <person name="Matsunawa H."/>
            <person name="Ichihara T."/>
            <person name="Shiohata N."/>
            <person name="Sano S."/>
            <person name="Moriya S."/>
            <person name="Momiyama H."/>
            <person name="Satoh N."/>
            <person name="Takami S."/>
            <person name="Terashima Y."/>
            <person name="Suzuki O."/>
            <person name="Nakagawa S."/>
            <person name="Senoh A."/>
            <person name="Mizoguchi H."/>
            <person name="Goto Y."/>
            <person name="Shimizu F."/>
            <person name="Wakebe H."/>
            <person name="Hishigaki H."/>
            <person name="Watanabe T."/>
            <person name="Sugiyama A."/>
            <person name="Takemoto M."/>
            <person name="Kawakami B."/>
            <person name="Yamazaki M."/>
            <person name="Watanabe K."/>
            <person name="Kumagai A."/>
            <person name="Itakura S."/>
            <person name="Fukuzumi Y."/>
            <person name="Fujimori Y."/>
            <person name="Komiyama M."/>
            <person name="Tashiro H."/>
            <person name="Tanigami A."/>
            <person name="Fujiwara T."/>
            <person name="Ono T."/>
            <person name="Yamada K."/>
            <person name="Fujii Y."/>
            <person name="Ozaki K."/>
            <person name="Hirao M."/>
            <person name="Ohmori Y."/>
            <person name="Kawabata A."/>
            <person name="Hikiji T."/>
            <person name="Kobatake N."/>
            <person name="Inagaki H."/>
            <person name="Ikema Y."/>
            <person name="Okamoto S."/>
            <person name="Okitani R."/>
            <person name="Kawakami T."/>
            <person name="Noguchi S."/>
            <person name="Itoh T."/>
            <person name="Shigeta K."/>
            <person name="Senba T."/>
            <person name="Matsumura K."/>
            <person name="Nakajima Y."/>
            <person name="Mizuno T."/>
            <person name="Morinaga M."/>
            <person name="Sasaki M."/>
            <person name="Togashi T."/>
            <person name="Oyama M."/>
            <person name="Hata H."/>
            <person name="Watanabe M."/>
            <person name="Komatsu T."/>
            <person name="Mizushima-Sugano J."/>
            <person name="Satoh T."/>
            <person name="Shirai Y."/>
            <person name="Takahashi Y."/>
            <person name="Nakagawa K."/>
            <person name="Okumura K."/>
            <person name="Nagase T."/>
            <person name="Nomura N."/>
            <person name="Kikuchi H."/>
            <person name="Masuho Y."/>
            <person name="Yamashita R."/>
            <person name="Nakai K."/>
            <person name="Yada T."/>
            <person name="Nakamura Y."/>
            <person name="Ohara O."/>
            <person name="Isogai T."/>
            <person name="Sugano S."/>
        </authorList>
    </citation>
    <scope>NUCLEOTIDE SEQUENCE [LARGE SCALE MRNA] (ISOFORM 2)</scope>
    <source>
        <tissue>Small intestine</tissue>
        <tissue>Synovial cell</tissue>
    </source>
</reference>
<reference key="2">
    <citation type="journal article" date="2004" name="Nature">
        <title>The sequence and analysis of duplication-rich human chromosome 16.</title>
        <authorList>
            <person name="Martin J."/>
            <person name="Han C."/>
            <person name="Gordon L.A."/>
            <person name="Terry A."/>
            <person name="Prabhakar S."/>
            <person name="She X."/>
            <person name="Xie G."/>
            <person name="Hellsten U."/>
            <person name="Chan Y.M."/>
            <person name="Altherr M."/>
            <person name="Couronne O."/>
            <person name="Aerts A."/>
            <person name="Bajorek E."/>
            <person name="Black S."/>
            <person name="Blumer H."/>
            <person name="Branscomb E."/>
            <person name="Brown N.C."/>
            <person name="Bruno W.J."/>
            <person name="Buckingham J.M."/>
            <person name="Callen D.F."/>
            <person name="Campbell C.S."/>
            <person name="Campbell M.L."/>
            <person name="Campbell E.W."/>
            <person name="Caoile C."/>
            <person name="Challacombe J.F."/>
            <person name="Chasteen L.A."/>
            <person name="Chertkov O."/>
            <person name="Chi H.C."/>
            <person name="Christensen M."/>
            <person name="Clark L.M."/>
            <person name="Cohn J.D."/>
            <person name="Denys M."/>
            <person name="Detter J.C."/>
            <person name="Dickson M."/>
            <person name="Dimitrijevic-Bussod M."/>
            <person name="Escobar J."/>
            <person name="Fawcett J.J."/>
            <person name="Flowers D."/>
            <person name="Fotopulos D."/>
            <person name="Glavina T."/>
            <person name="Gomez M."/>
            <person name="Gonzales E."/>
            <person name="Goodstein D."/>
            <person name="Goodwin L.A."/>
            <person name="Grady D.L."/>
            <person name="Grigoriev I."/>
            <person name="Groza M."/>
            <person name="Hammon N."/>
            <person name="Hawkins T."/>
            <person name="Haydu L."/>
            <person name="Hildebrand C.E."/>
            <person name="Huang W."/>
            <person name="Israni S."/>
            <person name="Jett J."/>
            <person name="Jewett P.B."/>
            <person name="Kadner K."/>
            <person name="Kimball H."/>
            <person name="Kobayashi A."/>
            <person name="Krawczyk M.-C."/>
            <person name="Leyba T."/>
            <person name="Longmire J.L."/>
            <person name="Lopez F."/>
            <person name="Lou Y."/>
            <person name="Lowry S."/>
            <person name="Ludeman T."/>
            <person name="Manohar C.F."/>
            <person name="Mark G.A."/>
            <person name="McMurray K.L."/>
            <person name="Meincke L.J."/>
            <person name="Morgan J."/>
            <person name="Moyzis R.K."/>
            <person name="Mundt M.O."/>
            <person name="Munk A.C."/>
            <person name="Nandkeshwar R.D."/>
            <person name="Pitluck S."/>
            <person name="Pollard M."/>
            <person name="Predki P."/>
            <person name="Parson-Quintana B."/>
            <person name="Ramirez L."/>
            <person name="Rash S."/>
            <person name="Retterer J."/>
            <person name="Ricke D.O."/>
            <person name="Robinson D.L."/>
            <person name="Rodriguez A."/>
            <person name="Salamov A."/>
            <person name="Saunders E.H."/>
            <person name="Scott D."/>
            <person name="Shough T."/>
            <person name="Stallings R.L."/>
            <person name="Stalvey M."/>
            <person name="Sutherland R.D."/>
            <person name="Tapia R."/>
            <person name="Tesmer J.G."/>
            <person name="Thayer N."/>
            <person name="Thompson L.S."/>
            <person name="Tice H."/>
            <person name="Torney D.C."/>
            <person name="Tran-Gyamfi M."/>
            <person name="Tsai M."/>
            <person name="Ulanovsky L.E."/>
            <person name="Ustaszewska A."/>
            <person name="Vo N."/>
            <person name="White P.S."/>
            <person name="Williams A.L."/>
            <person name="Wills P.L."/>
            <person name="Wu J.-R."/>
            <person name="Wu K."/>
            <person name="Yang J."/>
            <person name="DeJong P."/>
            <person name="Bruce D."/>
            <person name="Doggett N.A."/>
            <person name="Deaven L."/>
            <person name="Schmutz J."/>
            <person name="Grimwood J."/>
            <person name="Richardson P."/>
            <person name="Rokhsar D.S."/>
            <person name="Eichler E.E."/>
            <person name="Gilna P."/>
            <person name="Lucas S.M."/>
            <person name="Myers R.M."/>
            <person name="Rubin E.M."/>
            <person name="Pennacchio L.A."/>
        </authorList>
    </citation>
    <scope>NUCLEOTIDE SEQUENCE [LARGE SCALE GENOMIC DNA]</scope>
</reference>
<reference key="3">
    <citation type="submission" date="2005-09" db="EMBL/GenBank/DDBJ databases">
        <authorList>
            <person name="Mural R.J."/>
            <person name="Istrail S."/>
            <person name="Sutton G.G."/>
            <person name="Florea L."/>
            <person name="Halpern A.L."/>
            <person name="Mobarry C.M."/>
            <person name="Lippert R."/>
            <person name="Walenz B."/>
            <person name="Shatkay H."/>
            <person name="Dew I."/>
            <person name="Miller J.R."/>
            <person name="Flanigan M.J."/>
            <person name="Edwards N.J."/>
            <person name="Bolanos R."/>
            <person name="Fasulo D."/>
            <person name="Halldorsson B.V."/>
            <person name="Hannenhalli S."/>
            <person name="Turner R."/>
            <person name="Yooseph S."/>
            <person name="Lu F."/>
            <person name="Nusskern D.R."/>
            <person name="Shue B.C."/>
            <person name="Zheng X.H."/>
            <person name="Zhong F."/>
            <person name="Delcher A.L."/>
            <person name="Huson D.H."/>
            <person name="Kravitz S.A."/>
            <person name="Mouchard L."/>
            <person name="Reinert K."/>
            <person name="Remington K.A."/>
            <person name="Clark A.G."/>
            <person name="Waterman M.S."/>
            <person name="Eichler E.E."/>
            <person name="Adams M.D."/>
            <person name="Hunkapiller M.W."/>
            <person name="Myers E.W."/>
            <person name="Venter J.C."/>
        </authorList>
    </citation>
    <scope>NUCLEOTIDE SEQUENCE [LARGE SCALE GENOMIC DNA]</scope>
</reference>
<reference key="4">
    <citation type="journal article" date="2004" name="Genome Res.">
        <title>The status, quality, and expansion of the NIH full-length cDNA project: the Mammalian Gene Collection (MGC).</title>
        <authorList>
            <consortium name="The MGC Project Team"/>
        </authorList>
    </citation>
    <scope>NUCLEOTIDE SEQUENCE [LARGE SCALE MRNA] (ISOFORMS 1 AND 3)</scope>
    <source>
        <tissue>Brain</tissue>
        <tissue>Eye</tissue>
        <tissue>Leukocyte</tissue>
    </source>
</reference>
<reference key="5">
    <citation type="journal article" date="2015" name="Sci. Rep.">
        <title>Ring finger protein 166 potentiates RNA virus-induced interferon-beta production via enhancing the ubiquitination of TRAF3 and TRAF6.</title>
        <authorList>
            <person name="Chen H.W."/>
            <person name="Yang Y.K."/>
            <person name="Xu H."/>
            <person name="Yang W.W."/>
            <person name="Zhai Z.H."/>
            <person name="Chen D.Y."/>
        </authorList>
    </citation>
    <scope>FUNCTION</scope>
    <scope>SUBCELLULAR LOCATION</scope>
</reference>
<reference key="6">
    <citation type="journal article" date="2016" name="Cell Rep.">
        <title>RNF166 Determines Recruitment of Adaptor Proteins during Antibacterial Autophagy.</title>
        <authorList>
            <person name="Heath R.J."/>
            <person name="Goel G."/>
            <person name="Baxt L.A."/>
            <person name="Rush J.S."/>
            <person name="Mohanan V."/>
            <person name="Paulus G.L.C."/>
            <person name="Jani V."/>
            <person name="Lassen K.G."/>
            <person name="Xavier R.J."/>
        </authorList>
    </citation>
    <scope>FUNCTION</scope>
    <scope>CATALYTIC ACTIVITY</scope>
    <scope>MUTAGENESIS OF CYS-33 AND CYS-36</scope>
    <scope>PATHWAY</scope>
</reference>
<keyword id="KW-0025">Alternative splicing</keyword>
<keyword id="KW-0072">Autophagy</keyword>
<keyword id="KW-0963">Cytoplasm</keyword>
<keyword id="KW-0391">Immunity</keyword>
<keyword id="KW-0399">Innate immunity</keyword>
<keyword id="KW-0479">Metal-binding</keyword>
<keyword id="KW-1267">Proteomics identification</keyword>
<keyword id="KW-1185">Reference proteome</keyword>
<keyword id="KW-0808">Transferase</keyword>
<keyword id="KW-0833">Ubl conjugation pathway</keyword>
<keyword id="KW-0862">Zinc</keyword>
<keyword id="KW-0863">Zinc-finger</keyword>
<accession>Q96A37</accession>
<accession>B3KQ03</accession>
<accession>D3DX75</accession>
<accession>H3BTU8</accession>
<accession>Q96DM0</accession>